<accession>P57336</accession>
<dbReference type="EC" id="3.1.2.6" evidence="1"/>
<dbReference type="EMBL" id="BA000003">
    <property type="protein sequence ID" value="BAB12958.1"/>
    <property type="molecule type" value="Genomic_DNA"/>
</dbReference>
<dbReference type="RefSeq" id="NP_240072.1">
    <property type="nucleotide sequence ID" value="NC_002528.1"/>
</dbReference>
<dbReference type="RefSeq" id="WP_009874200.1">
    <property type="nucleotide sequence ID" value="NZ_AP036055.1"/>
</dbReference>
<dbReference type="SMR" id="P57336"/>
<dbReference type="STRING" id="563178.BUAP5A_242"/>
<dbReference type="EnsemblBacteria" id="BAB12958">
    <property type="protein sequence ID" value="BAB12958"/>
    <property type="gene ID" value="BAB12958"/>
</dbReference>
<dbReference type="KEGG" id="buc:BU246"/>
<dbReference type="PATRIC" id="fig|107806.10.peg.256"/>
<dbReference type="eggNOG" id="COG0491">
    <property type="taxonomic scope" value="Bacteria"/>
</dbReference>
<dbReference type="HOGENOM" id="CLU_030571_4_1_6"/>
<dbReference type="UniPathway" id="UPA00619">
    <property type="reaction ID" value="UER00676"/>
</dbReference>
<dbReference type="Proteomes" id="UP000001806">
    <property type="component" value="Chromosome"/>
</dbReference>
<dbReference type="GO" id="GO:0004416">
    <property type="term" value="F:hydroxyacylglutathione hydrolase activity"/>
    <property type="evidence" value="ECO:0007669"/>
    <property type="project" value="UniProtKB-UniRule"/>
</dbReference>
<dbReference type="GO" id="GO:0046872">
    <property type="term" value="F:metal ion binding"/>
    <property type="evidence" value="ECO:0007669"/>
    <property type="project" value="UniProtKB-KW"/>
</dbReference>
<dbReference type="GO" id="GO:0019243">
    <property type="term" value="P:methylglyoxal catabolic process to D-lactate via S-lactoyl-glutathione"/>
    <property type="evidence" value="ECO:0007669"/>
    <property type="project" value="InterPro"/>
</dbReference>
<dbReference type="CDD" id="cd07723">
    <property type="entry name" value="hydroxyacylglutathione_hydrolase_MBL-fold"/>
    <property type="match status" value="1"/>
</dbReference>
<dbReference type="Gene3D" id="3.60.15.10">
    <property type="entry name" value="Ribonuclease Z/Hydroxyacylglutathione hydrolase-like"/>
    <property type="match status" value="1"/>
</dbReference>
<dbReference type="HAMAP" id="MF_01374">
    <property type="entry name" value="Glyoxalase_2"/>
    <property type="match status" value="1"/>
</dbReference>
<dbReference type="InterPro" id="IPR035680">
    <property type="entry name" value="Clx_II_MBL"/>
</dbReference>
<dbReference type="InterPro" id="IPR050110">
    <property type="entry name" value="Glyoxalase_II_hydrolase"/>
</dbReference>
<dbReference type="InterPro" id="IPR032282">
    <property type="entry name" value="HAGH_C"/>
</dbReference>
<dbReference type="InterPro" id="IPR017782">
    <property type="entry name" value="Hydroxyacylglutathione_Hdrlase"/>
</dbReference>
<dbReference type="InterPro" id="IPR001279">
    <property type="entry name" value="Metallo-B-lactamas"/>
</dbReference>
<dbReference type="InterPro" id="IPR036866">
    <property type="entry name" value="RibonucZ/Hydroxyglut_hydro"/>
</dbReference>
<dbReference type="NCBIfam" id="TIGR03413">
    <property type="entry name" value="GSH_gloB"/>
    <property type="match status" value="1"/>
</dbReference>
<dbReference type="PANTHER" id="PTHR43705">
    <property type="entry name" value="HYDROXYACYLGLUTATHIONE HYDROLASE"/>
    <property type="match status" value="1"/>
</dbReference>
<dbReference type="PANTHER" id="PTHR43705:SF1">
    <property type="entry name" value="HYDROXYACYLGLUTATHIONE HYDROLASE GLOB"/>
    <property type="match status" value="1"/>
</dbReference>
<dbReference type="Pfam" id="PF16123">
    <property type="entry name" value="HAGH_C"/>
    <property type="match status" value="1"/>
</dbReference>
<dbReference type="Pfam" id="PF00753">
    <property type="entry name" value="Lactamase_B"/>
    <property type="match status" value="1"/>
</dbReference>
<dbReference type="SMART" id="SM00849">
    <property type="entry name" value="Lactamase_B"/>
    <property type="match status" value="1"/>
</dbReference>
<dbReference type="SUPFAM" id="SSF56281">
    <property type="entry name" value="Metallo-hydrolase/oxidoreductase"/>
    <property type="match status" value="1"/>
</dbReference>
<gene>
    <name evidence="1" type="primary">gloB</name>
    <name type="ordered locus">BU246</name>
</gene>
<sequence>MILKKISILSDNYVWVLLNTSGSCIIIDPGLSEPIIQEIERKKWRLRAILLTHNHIDHTGGTRKIIEYFPKISVFGPKETRQHGVNKIVSHGDRIILLDKIFYVFFTPGHTSGHVSYYSQPYIFCGDTLFSAGCGRVFKNKHLEMYRSIKIISSLPDSTLLCCSHEYTLSNLQFSMFILPNDNFIKLYLKKIEIKLKLGQSSLPSYIFFEKKINLFLRTNDNYVKKSIGLKSTCTDFEVFKRLRLKKDFWS</sequence>
<evidence type="ECO:0000255" key="1">
    <source>
        <dbReference type="HAMAP-Rule" id="MF_01374"/>
    </source>
</evidence>
<reference key="1">
    <citation type="journal article" date="2000" name="Nature">
        <title>Genome sequence of the endocellular bacterial symbiont of aphids Buchnera sp. APS.</title>
        <authorList>
            <person name="Shigenobu S."/>
            <person name="Watanabe H."/>
            <person name="Hattori M."/>
            <person name="Sakaki Y."/>
            <person name="Ishikawa H."/>
        </authorList>
    </citation>
    <scope>NUCLEOTIDE SEQUENCE [LARGE SCALE GENOMIC DNA]</scope>
    <source>
        <strain>APS</strain>
    </source>
</reference>
<proteinExistence type="inferred from homology"/>
<comment type="function">
    <text evidence="1">Thiolesterase that catalyzes the hydrolysis of S-D-lactoyl-glutathione to form glutathione and D-lactic acid.</text>
</comment>
<comment type="catalytic activity">
    <reaction evidence="1">
        <text>an S-(2-hydroxyacyl)glutathione + H2O = a 2-hydroxy carboxylate + glutathione + H(+)</text>
        <dbReference type="Rhea" id="RHEA:21864"/>
        <dbReference type="ChEBI" id="CHEBI:15377"/>
        <dbReference type="ChEBI" id="CHEBI:15378"/>
        <dbReference type="ChEBI" id="CHEBI:57925"/>
        <dbReference type="ChEBI" id="CHEBI:58896"/>
        <dbReference type="ChEBI" id="CHEBI:71261"/>
        <dbReference type="EC" id="3.1.2.6"/>
    </reaction>
</comment>
<comment type="cofactor">
    <cofactor evidence="1">
        <name>Zn(2+)</name>
        <dbReference type="ChEBI" id="CHEBI:29105"/>
    </cofactor>
    <text evidence="1">Binds 2 Zn(2+) ions per subunit.</text>
</comment>
<comment type="pathway">
    <text evidence="1">Secondary metabolite metabolism; methylglyoxal degradation; (R)-lactate from methylglyoxal: step 2/2.</text>
</comment>
<comment type="subunit">
    <text evidence="1">Monomer.</text>
</comment>
<comment type="similarity">
    <text evidence="1">Belongs to the metallo-beta-lactamase superfamily. Glyoxalase II family.</text>
</comment>
<organism>
    <name type="scientific">Buchnera aphidicola subsp. Acyrthosiphon pisum (strain APS)</name>
    <name type="common">Acyrthosiphon pisum symbiotic bacterium</name>
    <dbReference type="NCBI Taxonomy" id="107806"/>
    <lineage>
        <taxon>Bacteria</taxon>
        <taxon>Pseudomonadati</taxon>
        <taxon>Pseudomonadota</taxon>
        <taxon>Gammaproteobacteria</taxon>
        <taxon>Enterobacterales</taxon>
        <taxon>Erwiniaceae</taxon>
        <taxon>Buchnera</taxon>
    </lineage>
</organism>
<protein>
    <recommendedName>
        <fullName evidence="1">Hydroxyacylglutathione hydrolase</fullName>
        <ecNumber evidence="1">3.1.2.6</ecNumber>
    </recommendedName>
    <alternativeName>
        <fullName evidence="1">Glyoxalase II</fullName>
        <shortName evidence="1">Glx II</shortName>
    </alternativeName>
</protein>
<name>GLO2_BUCAI</name>
<keyword id="KW-0378">Hydrolase</keyword>
<keyword id="KW-0479">Metal-binding</keyword>
<keyword id="KW-1185">Reference proteome</keyword>
<keyword id="KW-0862">Zinc</keyword>
<feature type="chain" id="PRO_0000192348" description="Hydroxyacylglutathione hydrolase">
    <location>
        <begin position="1"/>
        <end position="251"/>
    </location>
</feature>
<feature type="binding site" evidence="1">
    <location>
        <position position="53"/>
    </location>
    <ligand>
        <name>Zn(2+)</name>
        <dbReference type="ChEBI" id="CHEBI:29105"/>
        <label>1</label>
    </ligand>
</feature>
<feature type="binding site" evidence="1">
    <location>
        <position position="55"/>
    </location>
    <ligand>
        <name>Zn(2+)</name>
        <dbReference type="ChEBI" id="CHEBI:29105"/>
        <label>1</label>
    </ligand>
</feature>
<feature type="binding site" evidence="1">
    <location>
        <position position="57"/>
    </location>
    <ligand>
        <name>Zn(2+)</name>
        <dbReference type="ChEBI" id="CHEBI:29105"/>
        <label>2</label>
    </ligand>
</feature>
<feature type="binding site" evidence="1">
    <location>
        <position position="58"/>
    </location>
    <ligand>
        <name>Zn(2+)</name>
        <dbReference type="ChEBI" id="CHEBI:29105"/>
        <label>2</label>
    </ligand>
</feature>
<feature type="binding site" evidence="1">
    <location>
        <position position="110"/>
    </location>
    <ligand>
        <name>Zn(2+)</name>
        <dbReference type="ChEBI" id="CHEBI:29105"/>
        <label>1</label>
    </ligand>
</feature>
<feature type="binding site" evidence="1">
    <location>
        <position position="127"/>
    </location>
    <ligand>
        <name>Zn(2+)</name>
        <dbReference type="ChEBI" id="CHEBI:29105"/>
        <label>1</label>
    </ligand>
</feature>
<feature type="binding site" evidence="1">
    <location>
        <position position="127"/>
    </location>
    <ligand>
        <name>Zn(2+)</name>
        <dbReference type="ChEBI" id="CHEBI:29105"/>
        <label>2</label>
    </ligand>
</feature>
<feature type="binding site" evidence="1">
    <location>
        <position position="165"/>
    </location>
    <ligand>
        <name>Zn(2+)</name>
        <dbReference type="ChEBI" id="CHEBI:29105"/>
        <label>2</label>
    </ligand>
</feature>